<protein>
    <recommendedName>
        <fullName>Probable exo-1,4-beta-xylosidase xlnD</fullName>
        <ecNumber>3.2.1.37</ecNumber>
    </recommendedName>
    <alternativeName>
        <fullName>1,4-beta-D-xylan xylohydrolase xlnD</fullName>
    </alternativeName>
    <alternativeName>
        <fullName>Beta-xylosidase A</fullName>
    </alternativeName>
    <alternativeName>
        <fullName>Beta-xylosidase xlnD</fullName>
    </alternativeName>
    <alternativeName>
        <fullName>Xylobiase xlnD</fullName>
    </alternativeName>
</protein>
<organism>
    <name type="scientific">Aspergillus fumigatus (strain ATCC MYA-4609 / CBS 101355 / FGSC A1100 / Af293)</name>
    <name type="common">Neosartorya fumigata</name>
    <dbReference type="NCBI Taxonomy" id="330879"/>
    <lineage>
        <taxon>Eukaryota</taxon>
        <taxon>Fungi</taxon>
        <taxon>Dikarya</taxon>
        <taxon>Ascomycota</taxon>
        <taxon>Pezizomycotina</taxon>
        <taxon>Eurotiomycetes</taxon>
        <taxon>Eurotiomycetidae</taxon>
        <taxon>Eurotiales</taxon>
        <taxon>Aspergillaceae</taxon>
        <taxon>Aspergillus</taxon>
        <taxon>Aspergillus subgen. Fumigati</taxon>
    </lineage>
</organism>
<keyword id="KW-0119">Carbohydrate metabolism</keyword>
<keyword id="KW-0325">Glycoprotein</keyword>
<keyword id="KW-0326">Glycosidase</keyword>
<keyword id="KW-0378">Hydrolase</keyword>
<keyword id="KW-0624">Polysaccharide degradation</keyword>
<keyword id="KW-1185">Reference proteome</keyword>
<keyword id="KW-0964">Secreted</keyword>
<keyword id="KW-0732">Signal</keyword>
<keyword id="KW-0858">Xylan degradation</keyword>
<accession>Q4WRB0</accession>
<accession>Q0H905</accession>
<feature type="signal peptide" evidence="2">
    <location>
        <begin position="1"/>
        <end position="20"/>
    </location>
</feature>
<feature type="chain" id="PRO_0000393288" description="Probable exo-1,4-beta-xylosidase xlnD">
    <location>
        <begin position="21"/>
        <end position="792"/>
    </location>
</feature>
<feature type="active site" evidence="1">
    <location>
        <position position="310"/>
    </location>
</feature>
<feature type="glycosylation site" description="N-linked (GlcNAc...) asparagine" evidence="2">
    <location>
        <position position="23"/>
    </location>
</feature>
<feature type="glycosylation site" description="N-linked (GlcNAc...) asparagine" evidence="2">
    <location>
        <position position="87"/>
    </location>
</feature>
<feature type="glycosylation site" description="N-linked (GlcNAc...) asparagine" evidence="2">
    <location>
        <position position="118"/>
    </location>
</feature>
<feature type="glycosylation site" description="N-linked (GlcNAc...) asparagine" evidence="2">
    <location>
        <position position="142"/>
    </location>
</feature>
<feature type="glycosylation site" description="N-linked (GlcNAc...) asparagine" evidence="2">
    <location>
        <position position="246"/>
    </location>
</feature>
<feature type="glycosylation site" description="N-linked (GlcNAc...) asparagine" evidence="2">
    <location>
        <position position="326"/>
    </location>
</feature>
<feature type="glycosylation site" description="N-linked (GlcNAc...) asparagine" evidence="2">
    <location>
        <position position="385"/>
    </location>
</feature>
<feature type="glycosylation site" description="N-linked (GlcNAc...) asparagine" evidence="2">
    <location>
        <position position="404"/>
    </location>
</feature>
<feature type="glycosylation site" description="N-linked (GlcNAc...) asparagine" evidence="2">
    <location>
        <position position="440"/>
    </location>
</feature>
<feature type="glycosylation site" description="N-linked (GlcNAc...) asparagine" evidence="2">
    <location>
        <position position="477"/>
    </location>
</feature>
<feature type="glycosylation site" description="N-linked (GlcNAc...) asparagine" evidence="2">
    <location>
        <position position="518"/>
    </location>
</feature>
<feature type="glycosylation site" description="N-linked (GlcNAc...) asparagine" evidence="2">
    <location>
        <position position="679"/>
    </location>
</feature>
<feature type="glycosylation site" description="N-linked (GlcNAc...) asparagine" evidence="2">
    <location>
        <position position="701"/>
    </location>
</feature>
<feature type="sequence conflict" description="In Ref. 1; ABA40420." evidence="3" ref="1">
    <original>S</original>
    <variation>A</variation>
    <location>
        <position position="2"/>
    </location>
</feature>
<reference key="1">
    <citation type="submission" date="2005-08" db="EMBL/GenBank/DDBJ databases">
        <title>Characterization of recombinant xylan degrading enzymes from Aspergillus fumigatus isolate SL1.</title>
        <authorList>
            <person name="Dabrowski S."/>
            <person name="Ahring B.K."/>
        </authorList>
    </citation>
    <scope>NUCLEOTIDE SEQUENCE [MRNA]</scope>
    <source>
        <strain>SL1</strain>
    </source>
</reference>
<reference key="2">
    <citation type="journal article" date="2005" name="Nature">
        <title>Genomic sequence of the pathogenic and allergenic filamentous fungus Aspergillus fumigatus.</title>
        <authorList>
            <person name="Nierman W.C."/>
            <person name="Pain A."/>
            <person name="Anderson M.J."/>
            <person name="Wortman J.R."/>
            <person name="Kim H.S."/>
            <person name="Arroyo J."/>
            <person name="Berriman M."/>
            <person name="Abe K."/>
            <person name="Archer D.B."/>
            <person name="Bermejo C."/>
            <person name="Bennett J.W."/>
            <person name="Bowyer P."/>
            <person name="Chen D."/>
            <person name="Collins M."/>
            <person name="Coulsen R."/>
            <person name="Davies R."/>
            <person name="Dyer P.S."/>
            <person name="Farman M.L."/>
            <person name="Fedorova N."/>
            <person name="Fedorova N.D."/>
            <person name="Feldblyum T.V."/>
            <person name="Fischer R."/>
            <person name="Fosker N."/>
            <person name="Fraser A."/>
            <person name="Garcia J.L."/>
            <person name="Garcia M.J."/>
            <person name="Goble A."/>
            <person name="Goldman G.H."/>
            <person name="Gomi K."/>
            <person name="Griffith-Jones S."/>
            <person name="Gwilliam R."/>
            <person name="Haas B.J."/>
            <person name="Haas H."/>
            <person name="Harris D.E."/>
            <person name="Horiuchi H."/>
            <person name="Huang J."/>
            <person name="Humphray S."/>
            <person name="Jimenez J."/>
            <person name="Keller N."/>
            <person name="Khouri H."/>
            <person name="Kitamoto K."/>
            <person name="Kobayashi T."/>
            <person name="Konzack S."/>
            <person name="Kulkarni R."/>
            <person name="Kumagai T."/>
            <person name="Lafton A."/>
            <person name="Latge J.-P."/>
            <person name="Li W."/>
            <person name="Lord A."/>
            <person name="Lu C."/>
            <person name="Majoros W.H."/>
            <person name="May G.S."/>
            <person name="Miller B.L."/>
            <person name="Mohamoud Y."/>
            <person name="Molina M."/>
            <person name="Monod M."/>
            <person name="Mouyna I."/>
            <person name="Mulligan S."/>
            <person name="Murphy L.D."/>
            <person name="O'Neil S."/>
            <person name="Paulsen I."/>
            <person name="Penalva M.A."/>
            <person name="Pertea M."/>
            <person name="Price C."/>
            <person name="Pritchard B.L."/>
            <person name="Quail M.A."/>
            <person name="Rabbinowitsch E."/>
            <person name="Rawlins N."/>
            <person name="Rajandream M.A."/>
            <person name="Reichard U."/>
            <person name="Renauld H."/>
            <person name="Robson G.D."/>
            <person name="Rodriguez de Cordoba S."/>
            <person name="Rodriguez-Pena J.M."/>
            <person name="Ronning C.M."/>
            <person name="Rutter S."/>
            <person name="Salzberg S.L."/>
            <person name="Sanchez M."/>
            <person name="Sanchez-Ferrero J.C."/>
            <person name="Saunders D."/>
            <person name="Seeger K."/>
            <person name="Squares R."/>
            <person name="Squares S."/>
            <person name="Takeuchi M."/>
            <person name="Tekaia F."/>
            <person name="Turner G."/>
            <person name="Vazquez de Aldana C.R."/>
            <person name="Weidman J."/>
            <person name="White O."/>
            <person name="Woodward J.R."/>
            <person name="Yu J.-H."/>
            <person name="Fraser C.M."/>
            <person name="Galagan J.E."/>
            <person name="Asai K."/>
            <person name="Machida M."/>
            <person name="Hall N."/>
            <person name="Barrell B.G."/>
            <person name="Denning D.W."/>
        </authorList>
    </citation>
    <scope>NUCLEOTIDE SEQUENCE [LARGE SCALE GENOMIC DNA]</scope>
    <source>
        <strain>ATCC MYA-4609 / CBS 101355 / FGSC A1100 / Af293</strain>
    </source>
</reference>
<name>XYND_ASPFU</name>
<proteinExistence type="evidence at transcript level"/>
<sequence length="792" mass="86386">MSVAKSIAAVLVALLPGALAQANTSYVDYNVEANPDLTPQSVATIDLSFPDCENGPLSKTLVCDTSARPHDRAAALVSMFTFEELVNNTGNTSPGVPRLGLPPYQVWSEALHGLDRANFTDEGEYSWATSFPMPILTMSALNRTLINQIATIIATQGRAFNNVGRYGLDVYAPNINAFRSAMWGRGQETPGEDAYCLASAYAYEYITGIQGGVDPEHLKLVATAKHYAGYDLENWDGHSRLGNDMNITQQELSEYYTPQFLVAARDAKVHSVMCSYNAVNGVPSCANSFFLQTLLRDTFGFVEDGYVSSDCDSAYNVWNPHEFAANITGAAADSIRAGTDIDCGTTYQYYFGEAFDEQEVTRAEIERGVIRLYSNLVRLGYFDGNGSVYRDLTWNDVVTTDAWNISYEAAVEGIVLLKNDGTLPLAKSVRSVALIGPWMNVTTQLQGNYFGPAPYLISPLNAFQNSDFDVNYAFGTNISSHSTDGFSEALSAAKKSDVIIFAGGIDNTLEAEAMDRMNITWPGNQLQLIDQLSQLGKPLIVLQMGGGQVDSSSLKSNKNVNSLIWGGYPGQSGGQALLDIITGKRAPAGRLVVTQYPAEYATQFPATDMSLRPHGNNPGQTYMWYTGTPVYEFGHGLFYTTFHASLPGTGKDKTSFNIQDLLTQPHPGFANVEQMPLLNFTVTITNTGKVASDYTAMLFANTTAGPAPYPNKWLVGFDRLASLEPHRSQTMTIPVTIDSVARTDEAGNRVLYPGKYELALNNERSVVLQFVLTGREAVVFKWPVEQQQISSA</sequence>
<comment type="function">
    <text evidence="1">Xylan 1,4-beta-xylosidase involved in the hydrolysis of xylan, a major structural heterogeneous polysaccharide found in plant biomass representing the second most abundant polysaccharide in the biosphere, after cellulose.</text>
</comment>
<comment type="catalytic activity">
    <reaction>
        <text>Hydrolysis of (1-&gt;4)-beta-D-xylans, to remove successive D-xylose residues from the non-reducing termini.</text>
        <dbReference type="EC" id="3.2.1.37"/>
    </reaction>
</comment>
<comment type="pathway">
    <text>Glycan degradation; xylan degradation.</text>
</comment>
<comment type="subcellular location">
    <subcellularLocation>
        <location evidence="1">Secreted</location>
    </subcellularLocation>
</comment>
<comment type="similarity">
    <text evidence="3">Belongs to the glycosyl hydrolase 3 family.</text>
</comment>
<evidence type="ECO:0000250" key="1"/>
<evidence type="ECO:0000255" key="2"/>
<evidence type="ECO:0000305" key="3"/>
<gene>
    <name type="primary">xlnD</name>
    <name type="synonym">xylA</name>
    <name type="ORF">AFUA_1G16920</name>
</gene>
<dbReference type="EC" id="3.2.1.37"/>
<dbReference type="EMBL" id="DQ156554">
    <property type="protein sequence ID" value="ABA40420.1"/>
    <property type="molecule type" value="mRNA"/>
</dbReference>
<dbReference type="EMBL" id="AAHF01000004">
    <property type="protein sequence ID" value="EAL91022.1"/>
    <property type="molecule type" value="Genomic_DNA"/>
</dbReference>
<dbReference type="RefSeq" id="XP_753060.1">
    <property type="nucleotide sequence ID" value="XM_747967.1"/>
</dbReference>
<dbReference type="SMR" id="Q4WRB0"/>
<dbReference type="STRING" id="330879.Q4WRB0"/>
<dbReference type="CAZy" id="GH3">
    <property type="family name" value="Glycoside Hydrolase Family 3"/>
</dbReference>
<dbReference type="GlyCosmos" id="Q4WRB0">
    <property type="glycosylation" value="13 sites, No reported glycans"/>
</dbReference>
<dbReference type="EnsemblFungi" id="EAL91022">
    <property type="protein sequence ID" value="EAL91022"/>
    <property type="gene ID" value="AFUA_1G16920"/>
</dbReference>
<dbReference type="GeneID" id="3510092"/>
<dbReference type="KEGG" id="afm:AFUA_1G16920"/>
<dbReference type="VEuPathDB" id="FungiDB:Afu1g16920"/>
<dbReference type="eggNOG" id="ENOG502QQ55">
    <property type="taxonomic scope" value="Eukaryota"/>
</dbReference>
<dbReference type="HOGENOM" id="CLU_004542_5_3_1"/>
<dbReference type="InParanoid" id="Q4WRB0"/>
<dbReference type="OMA" id="TWNFVED"/>
<dbReference type="OrthoDB" id="47059at2759"/>
<dbReference type="UniPathway" id="UPA00114"/>
<dbReference type="Proteomes" id="UP000002530">
    <property type="component" value="Chromosome 1"/>
</dbReference>
<dbReference type="GO" id="GO:0005576">
    <property type="term" value="C:extracellular region"/>
    <property type="evidence" value="ECO:0007669"/>
    <property type="project" value="UniProtKB-SubCell"/>
</dbReference>
<dbReference type="GO" id="GO:0046556">
    <property type="term" value="F:alpha-L-arabinofuranosidase activity"/>
    <property type="evidence" value="ECO:0000318"/>
    <property type="project" value="GO_Central"/>
</dbReference>
<dbReference type="GO" id="GO:0009044">
    <property type="term" value="F:xylan 1,4-beta-xylosidase activity"/>
    <property type="evidence" value="ECO:0000318"/>
    <property type="project" value="GO_Central"/>
</dbReference>
<dbReference type="GO" id="GO:0031222">
    <property type="term" value="P:arabinan catabolic process"/>
    <property type="evidence" value="ECO:0000318"/>
    <property type="project" value="GO_Central"/>
</dbReference>
<dbReference type="GO" id="GO:0045493">
    <property type="term" value="P:xylan catabolic process"/>
    <property type="evidence" value="ECO:0000318"/>
    <property type="project" value="GO_Central"/>
</dbReference>
<dbReference type="FunFam" id="2.60.40.10:FF:001420">
    <property type="entry name" value="Exo-1,4-beta-xylosidase xlnD"/>
    <property type="match status" value="1"/>
</dbReference>
<dbReference type="FunFam" id="3.20.20.300:FF:000009">
    <property type="entry name" value="Exo-1,4-beta-xylosidase xlnD"/>
    <property type="match status" value="1"/>
</dbReference>
<dbReference type="FunFam" id="3.40.50.1700:FF:000007">
    <property type="entry name" value="Exo-1,4-beta-xylosidase xlnD"/>
    <property type="match status" value="1"/>
</dbReference>
<dbReference type="Gene3D" id="3.40.50.1700">
    <property type="entry name" value="Glycoside hydrolase family 3 C-terminal domain"/>
    <property type="match status" value="1"/>
</dbReference>
<dbReference type="Gene3D" id="3.20.20.300">
    <property type="entry name" value="Glycoside hydrolase, family 3, N-terminal domain"/>
    <property type="match status" value="1"/>
</dbReference>
<dbReference type="Gene3D" id="2.60.40.10">
    <property type="entry name" value="Immunoglobulins"/>
    <property type="match status" value="1"/>
</dbReference>
<dbReference type="InterPro" id="IPR044993">
    <property type="entry name" value="BXL"/>
</dbReference>
<dbReference type="InterPro" id="IPR026891">
    <property type="entry name" value="Fn3-like"/>
</dbReference>
<dbReference type="InterPro" id="IPR002772">
    <property type="entry name" value="Glyco_hydro_3_C"/>
</dbReference>
<dbReference type="InterPro" id="IPR036881">
    <property type="entry name" value="Glyco_hydro_3_C_sf"/>
</dbReference>
<dbReference type="InterPro" id="IPR001764">
    <property type="entry name" value="Glyco_hydro_3_N"/>
</dbReference>
<dbReference type="InterPro" id="IPR036962">
    <property type="entry name" value="Glyco_hydro_3_N_sf"/>
</dbReference>
<dbReference type="InterPro" id="IPR017853">
    <property type="entry name" value="Glycoside_hydrolase_SF"/>
</dbReference>
<dbReference type="InterPro" id="IPR013783">
    <property type="entry name" value="Ig-like_fold"/>
</dbReference>
<dbReference type="PANTHER" id="PTHR42721:SF13">
    <property type="entry name" value="EXO-1,4-BETA-XYLOSIDASE XLND"/>
    <property type="match status" value="1"/>
</dbReference>
<dbReference type="PANTHER" id="PTHR42721">
    <property type="entry name" value="SUGAR HYDROLASE-RELATED"/>
    <property type="match status" value="1"/>
</dbReference>
<dbReference type="Pfam" id="PF14310">
    <property type="entry name" value="Fn3-like"/>
    <property type="match status" value="1"/>
</dbReference>
<dbReference type="Pfam" id="PF00933">
    <property type="entry name" value="Glyco_hydro_3"/>
    <property type="match status" value="1"/>
</dbReference>
<dbReference type="Pfam" id="PF01915">
    <property type="entry name" value="Glyco_hydro_3_C"/>
    <property type="match status" value="1"/>
</dbReference>
<dbReference type="SMART" id="SM01217">
    <property type="entry name" value="Fn3_like"/>
    <property type="match status" value="1"/>
</dbReference>
<dbReference type="SUPFAM" id="SSF51445">
    <property type="entry name" value="(Trans)glycosidases"/>
    <property type="match status" value="1"/>
</dbReference>
<dbReference type="SUPFAM" id="SSF52279">
    <property type="entry name" value="Beta-D-glucan exohydrolase, C-terminal domain"/>
    <property type="match status" value="1"/>
</dbReference>